<accession>Q9LPI5</accession>
<accession>Q94JR0</accession>
<gene>
    <name type="primary">CID11</name>
    <name type="ordered locus">At1g32790</name>
    <name type="ORF">F6N18.17</name>
</gene>
<proteinExistence type="evidence at transcript level"/>
<sequence>MAVVETGAAATAADAGGVVIQPPPSSPPSSMTSQDSGVSSDDQNHHSRIDQVLRHDQGLYSKIGSHVARSDGVDGGESFKRDMRELQELFSKLNPMAEEFVPPSLNKQGGNGVNGGFFTSAGSFFRNNGFAGTGNGGYGNENGGFRRKKSFGQGKRRMNARTSMAQREDVIRRTVYVSDLDQQVTEEQLAGLFVSCGQVVDCRICGDPNSVLRFAFIEFTDEEGAMTALNLSGTMLGFYPVKVLPSKTAIAPVNPTFLPRTEDEREMCARTIYCTNIDKKVTQSDVKIFFESFCGEVYRLRLLGDYQHSTRIAFVEFVMAESAIAALNCSGVVLGSLPIRVSPSKTPVRPRSPRHPMH</sequence>
<dbReference type="EMBL" id="AC017118">
    <property type="protein sequence ID" value="AAF25974.1"/>
    <property type="molecule type" value="Genomic_DNA"/>
</dbReference>
<dbReference type="EMBL" id="CP002684">
    <property type="protein sequence ID" value="AEE31529.1"/>
    <property type="molecule type" value="Genomic_DNA"/>
</dbReference>
<dbReference type="EMBL" id="AF375434">
    <property type="protein sequence ID" value="AAK53018.1"/>
    <property type="status" value="ALT_FRAME"/>
    <property type="molecule type" value="mRNA"/>
</dbReference>
<dbReference type="EMBL" id="BT002225">
    <property type="protein sequence ID" value="AAN72236.1"/>
    <property type="molecule type" value="mRNA"/>
</dbReference>
<dbReference type="EMBL" id="AY089165">
    <property type="status" value="NOT_ANNOTATED_CDS"/>
    <property type="molecule type" value="mRNA"/>
</dbReference>
<dbReference type="PIR" id="F86452">
    <property type="entry name" value="F86452"/>
</dbReference>
<dbReference type="RefSeq" id="NP_174556.1">
    <molecule id="Q9LPI5-1"/>
    <property type="nucleotide sequence ID" value="NM_103013.3"/>
</dbReference>
<dbReference type="SMR" id="Q9LPI5"/>
<dbReference type="FunCoup" id="Q9LPI5">
    <property type="interactions" value="1324"/>
</dbReference>
<dbReference type="STRING" id="3702.Q9LPI5"/>
<dbReference type="iPTMnet" id="Q9LPI5"/>
<dbReference type="PaxDb" id="3702-AT1G32790.2"/>
<dbReference type="ProteomicsDB" id="246904">
    <molecule id="Q9LPI5-1"/>
</dbReference>
<dbReference type="EnsemblPlants" id="AT1G32790.1">
    <molecule id="Q9LPI5-1"/>
    <property type="protein sequence ID" value="AT1G32790.1"/>
    <property type="gene ID" value="AT1G32790"/>
</dbReference>
<dbReference type="GeneID" id="840173"/>
<dbReference type="Gramene" id="AT1G32790.1">
    <molecule id="Q9LPI5-1"/>
    <property type="protein sequence ID" value="AT1G32790.1"/>
    <property type="gene ID" value="AT1G32790"/>
</dbReference>
<dbReference type="KEGG" id="ath:AT1G32790"/>
<dbReference type="Araport" id="AT1G32790"/>
<dbReference type="TAIR" id="AT1G32790">
    <property type="gene designation" value="CID11"/>
</dbReference>
<dbReference type="eggNOG" id="KOG0118">
    <property type="taxonomic scope" value="Eukaryota"/>
</dbReference>
<dbReference type="HOGENOM" id="CLU_042473_2_0_1"/>
<dbReference type="InParanoid" id="Q9LPI5"/>
<dbReference type="OMA" id="QSLYVMV"/>
<dbReference type="PhylomeDB" id="Q9LPI5"/>
<dbReference type="PRO" id="PR:Q9LPI5"/>
<dbReference type="Proteomes" id="UP000006548">
    <property type="component" value="Chromosome 1"/>
</dbReference>
<dbReference type="ExpressionAtlas" id="Q9LPI5">
    <property type="expression patterns" value="baseline and differential"/>
</dbReference>
<dbReference type="GO" id="GO:0005634">
    <property type="term" value="C:nucleus"/>
    <property type="evidence" value="ECO:0007669"/>
    <property type="project" value="UniProtKB-SubCell"/>
</dbReference>
<dbReference type="GO" id="GO:0003723">
    <property type="term" value="F:RNA binding"/>
    <property type="evidence" value="ECO:0007669"/>
    <property type="project" value="UniProtKB-KW"/>
</dbReference>
<dbReference type="CDD" id="cd12459">
    <property type="entry name" value="RRM1_CID8_like"/>
    <property type="match status" value="1"/>
</dbReference>
<dbReference type="CDD" id="cd12460">
    <property type="entry name" value="RRM2_CID8_like"/>
    <property type="match status" value="1"/>
</dbReference>
<dbReference type="FunFam" id="3.30.70.330:FF:000665">
    <property type="entry name" value="Polyadenylate-binding protein-interacting protein 10"/>
    <property type="match status" value="1"/>
</dbReference>
<dbReference type="FunFam" id="3.30.70.330:FF:000530">
    <property type="entry name" value="Polyadenylate-binding protein-interacting protein 11"/>
    <property type="match status" value="1"/>
</dbReference>
<dbReference type="Gene3D" id="3.30.70.330">
    <property type="match status" value="2"/>
</dbReference>
<dbReference type="InterPro" id="IPR034823">
    <property type="entry name" value="CID8-like_RRM1"/>
</dbReference>
<dbReference type="InterPro" id="IPR034825">
    <property type="entry name" value="CID8-like_RRM2"/>
</dbReference>
<dbReference type="InterPro" id="IPR012677">
    <property type="entry name" value="Nucleotide-bd_a/b_plait_sf"/>
</dbReference>
<dbReference type="InterPro" id="IPR009818">
    <property type="entry name" value="PAM2_motif"/>
</dbReference>
<dbReference type="InterPro" id="IPR035979">
    <property type="entry name" value="RBD_domain_sf"/>
</dbReference>
<dbReference type="InterPro" id="IPR000504">
    <property type="entry name" value="RRM_dom"/>
</dbReference>
<dbReference type="PANTHER" id="PTHR32343:SF72">
    <property type="entry name" value="POLYADENYLATE-BINDING PROTEIN-INTERACTING PROTEIN 11"/>
    <property type="match status" value="1"/>
</dbReference>
<dbReference type="PANTHER" id="PTHR32343">
    <property type="entry name" value="SERINE/ARGININE-RICH SPLICING FACTOR"/>
    <property type="match status" value="1"/>
</dbReference>
<dbReference type="Pfam" id="PF07145">
    <property type="entry name" value="PAM2"/>
    <property type="match status" value="1"/>
</dbReference>
<dbReference type="Pfam" id="PF00076">
    <property type="entry name" value="RRM_1"/>
    <property type="match status" value="2"/>
</dbReference>
<dbReference type="SMART" id="SM00360">
    <property type="entry name" value="RRM"/>
    <property type="match status" value="2"/>
</dbReference>
<dbReference type="SUPFAM" id="SSF54928">
    <property type="entry name" value="RNA-binding domain, RBD"/>
    <property type="match status" value="2"/>
</dbReference>
<dbReference type="PROSITE" id="PS50102">
    <property type="entry name" value="RRM"/>
    <property type="match status" value="2"/>
</dbReference>
<evidence type="ECO:0000255" key="1"/>
<evidence type="ECO:0000255" key="2">
    <source>
        <dbReference type="PROSITE-ProRule" id="PRU00176"/>
    </source>
</evidence>
<evidence type="ECO:0000256" key="3">
    <source>
        <dbReference type="SAM" id="MobiDB-lite"/>
    </source>
</evidence>
<evidence type="ECO:0000269" key="4">
    <source>
    </source>
</evidence>
<evidence type="ECO:0000305" key="5"/>
<comment type="subcellular location">
    <subcellularLocation>
        <location evidence="5">Nucleus</location>
    </subcellularLocation>
</comment>
<comment type="alternative products">
    <event type="alternative splicing"/>
    <isoform>
        <id>Q9LPI5-1</id>
        <name>1</name>
        <sequence type="displayed"/>
    </isoform>
    <text>A number of isoforms are produced. According to EST sequences.</text>
</comment>
<comment type="tissue specificity">
    <text evidence="4">Expressed in cauline leaves, stems, immature siliques and primary inflorescences.</text>
</comment>
<comment type="domain">
    <text>Contains a PAM2-like motif, which seems to be involved in the binding to the PABC/CTC domain of PAB proteins.</text>
</comment>
<comment type="sequence caution" evidence="5">
    <conflict type="frameshift">
        <sequence resource="EMBL-CDS" id="AAK53018"/>
    </conflict>
</comment>
<comment type="sequence caution" evidence="5">
    <conflict type="frameshift">
        <sequence resource="EMBL" id="AY089165"/>
    </conflict>
</comment>
<reference key="1">
    <citation type="journal article" date="2000" name="Nature">
        <title>Sequence and analysis of chromosome 1 of the plant Arabidopsis thaliana.</title>
        <authorList>
            <person name="Theologis A."/>
            <person name="Ecker J.R."/>
            <person name="Palm C.J."/>
            <person name="Federspiel N.A."/>
            <person name="Kaul S."/>
            <person name="White O."/>
            <person name="Alonso J."/>
            <person name="Altafi H."/>
            <person name="Araujo R."/>
            <person name="Bowman C.L."/>
            <person name="Brooks S.Y."/>
            <person name="Buehler E."/>
            <person name="Chan A."/>
            <person name="Chao Q."/>
            <person name="Chen H."/>
            <person name="Cheuk R.F."/>
            <person name="Chin C.W."/>
            <person name="Chung M.K."/>
            <person name="Conn L."/>
            <person name="Conway A.B."/>
            <person name="Conway A.R."/>
            <person name="Creasy T.H."/>
            <person name="Dewar K."/>
            <person name="Dunn P."/>
            <person name="Etgu P."/>
            <person name="Feldblyum T.V."/>
            <person name="Feng J.-D."/>
            <person name="Fong B."/>
            <person name="Fujii C.Y."/>
            <person name="Gill J.E."/>
            <person name="Goldsmith A.D."/>
            <person name="Haas B."/>
            <person name="Hansen N.F."/>
            <person name="Hughes B."/>
            <person name="Huizar L."/>
            <person name="Hunter J.L."/>
            <person name="Jenkins J."/>
            <person name="Johnson-Hopson C."/>
            <person name="Khan S."/>
            <person name="Khaykin E."/>
            <person name="Kim C.J."/>
            <person name="Koo H.L."/>
            <person name="Kremenetskaia I."/>
            <person name="Kurtz D.B."/>
            <person name="Kwan A."/>
            <person name="Lam B."/>
            <person name="Langin-Hooper S."/>
            <person name="Lee A."/>
            <person name="Lee J.M."/>
            <person name="Lenz C.A."/>
            <person name="Li J.H."/>
            <person name="Li Y.-P."/>
            <person name="Lin X."/>
            <person name="Liu S.X."/>
            <person name="Liu Z.A."/>
            <person name="Luros J.S."/>
            <person name="Maiti R."/>
            <person name="Marziali A."/>
            <person name="Militscher J."/>
            <person name="Miranda M."/>
            <person name="Nguyen M."/>
            <person name="Nierman W.C."/>
            <person name="Osborne B.I."/>
            <person name="Pai G."/>
            <person name="Peterson J."/>
            <person name="Pham P.K."/>
            <person name="Rizzo M."/>
            <person name="Rooney T."/>
            <person name="Rowley D."/>
            <person name="Sakano H."/>
            <person name="Salzberg S.L."/>
            <person name="Schwartz J.R."/>
            <person name="Shinn P."/>
            <person name="Southwick A.M."/>
            <person name="Sun H."/>
            <person name="Tallon L.J."/>
            <person name="Tambunga G."/>
            <person name="Toriumi M.J."/>
            <person name="Town C.D."/>
            <person name="Utterback T."/>
            <person name="Van Aken S."/>
            <person name="Vaysberg M."/>
            <person name="Vysotskaia V.S."/>
            <person name="Walker M."/>
            <person name="Wu D."/>
            <person name="Yu G."/>
            <person name="Fraser C.M."/>
            <person name="Venter J.C."/>
            <person name="Davis R.W."/>
        </authorList>
    </citation>
    <scope>NUCLEOTIDE SEQUENCE [LARGE SCALE GENOMIC DNA]</scope>
    <source>
        <strain>cv. Columbia</strain>
    </source>
</reference>
<reference key="2">
    <citation type="journal article" date="2017" name="Plant J.">
        <title>Araport11: a complete reannotation of the Arabidopsis thaliana reference genome.</title>
        <authorList>
            <person name="Cheng C.Y."/>
            <person name="Krishnakumar V."/>
            <person name="Chan A.P."/>
            <person name="Thibaud-Nissen F."/>
            <person name="Schobel S."/>
            <person name="Town C.D."/>
        </authorList>
    </citation>
    <scope>GENOME REANNOTATION</scope>
    <source>
        <strain>cv. Columbia</strain>
    </source>
</reference>
<reference key="3">
    <citation type="journal article" date="2003" name="Science">
        <title>Empirical analysis of transcriptional activity in the Arabidopsis genome.</title>
        <authorList>
            <person name="Yamada K."/>
            <person name="Lim J."/>
            <person name="Dale J.M."/>
            <person name="Chen H."/>
            <person name="Shinn P."/>
            <person name="Palm C.J."/>
            <person name="Southwick A.M."/>
            <person name="Wu H.C."/>
            <person name="Kim C.J."/>
            <person name="Nguyen M."/>
            <person name="Pham P.K."/>
            <person name="Cheuk R.F."/>
            <person name="Karlin-Newmann G."/>
            <person name="Liu S.X."/>
            <person name="Lam B."/>
            <person name="Sakano H."/>
            <person name="Wu T."/>
            <person name="Yu G."/>
            <person name="Miranda M."/>
            <person name="Quach H.L."/>
            <person name="Tripp M."/>
            <person name="Chang C.H."/>
            <person name="Lee J.M."/>
            <person name="Toriumi M.J."/>
            <person name="Chan M.M."/>
            <person name="Tang C.C."/>
            <person name="Onodera C.S."/>
            <person name="Deng J.M."/>
            <person name="Akiyama K."/>
            <person name="Ansari Y."/>
            <person name="Arakawa T."/>
            <person name="Banh J."/>
            <person name="Banno F."/>
            <person name="Bowser L."/>
            <person name="Brooks S.Y."/>
            <person name="Carninci P."/>
            <person name="Chao Q."/>
            <person name="Choy N."/>
            <person name="Enju A."/>
            <person name="Goldsmith A.D."/>
            <person name="Gurjal M."/>
            <person name="Hansen N.F."/>
            <person name="Hayashizaki Y."/>
            <person name="Johnson-Hopson C."/>
            <person name="Hsuan V.W."/>
            <person name="Iida K."/>
            <person name="Karnes M."/>
            <person name="Khan S."/>
            <person name="Koesema E."/>
            <person name="Ishida J."/>
            <person name="Jiang P.X."/>
            <person name="Jones T."/>
            <person name="Kawai J."/>
            <person name="Kamiya A."/>
            <person name="Meyers C."/>
            <person name="Nakajima M."/>
            <person name="Narusaka M."/>
            <person name="Seki M."/>
            <person name="Sakurai T."/>
            <person name="Satou M."/>
            <person name="Tamse R."/>
            <person name="Vaysberg M."/>
            <person name="Wallender E.K."/>
            <person name="Wong C."/>
            <person name="Yamamura Y."/>
            <person name="Yuan S."/>
            <person name="Shinozaki K."/>
            <person name="Davis R.W."/>
            <person name="Theologis A."/>
            <person name="Ecker J.R."/>
        </authorList>
    </citation>
    <scope>NUCLEOTIDE SEQUENCE [LARGE SCALE MRNA]</scope>
    <source>
        <strain>cv. Columbia</strain>
    </source>
</reference>
<reference key="4">
    <citation type="submission" date="2002-03" db="EMBL/GenBank/DDBJ databases">
        <title>Full-length cDNA from Arabidopsis thaliana.</title>
        <authorList>
            <person name="Brover V.V."/>
            <person name="Troukhan M.E."/>
            <person name="Alexandrov N.A."/>
            <person name="Lu Y.-P."/>
            <person name="Flavell R.B."/>
            <person name="Feldmann K.A."/>
        </authorList>
    </citation>
    <scope>NUCLEOTIDE SEQUENCE [LARGE SCALE MRNA]</scope>
</reference>
<reference key="5">
    <citation type="journal article" date="2005" name="Mol. Genet. Genomics">
        <title>Four distinct classes of proteins as interaction partners of the PABC domain of Arabidopsis thaliana Poly(A)-binding proteins.</title>
        <authorList>
            <person name="Bravo J."/>
            <person name="Aguilar-Henonin L."/>
            <person name="Olmedo G."/>
            <person name="Guzman P."/>
        </authorList>
    </citation>
    <scope>GENE FAMILY</scope>
    <scope>PAM2 MOTIF</scope>
    <scope>TISSUE SPECIFICITY</scope>
</reference>
<name>CID11_ARATH</name>
<keyword id="KW-0025">Alternative splicing</keyword>
<keyword id="KW-0539">Nucleus</keyword>
<keyword id="KW-1185">Reference proteome</keyword>
<keyword id="KW-0677">Repeat</keyword>
<keyword id="KW-0694">RNA-binding</keyword>
<feature type="chain" id="PRO_0000428901" description="Polyadenylate-binding protein-interacting protein 11">
    <location>
        <begin position="1"/>
        <end position="358"/>
    </location>
</feature>
<feature type="domain" description="RRM 1" evidence="2">
    <location>
        <begin position="173"/>
        <end position="248"/>
    </location>
</feature>
<feature type="domain" description="RRM 2" evidence="2">
    <location>
        <begin position="270"/>
        <end position="346"/>
    </location>
</feature>
<feature type="region of interest" description="Disordered" evidence="3">
    <location>
        <begin position="1"/>
        <end position="45"/>
    </location>
</feature>
<feature type="region of interest" description="Disordered" evidence="3">
    <location>
        <begin position="136"/>
        <end position="164"/>
    </location>
</feature>
<feature type="short sequence motif" description="PAM2-like">
    <location>
        <begin position="92"/>
        <end position="102"/>
    </location>
</feature>
<feature type="short sequence motif" description="Bipartite nuclear localization signal" evidence="1">
    <location>
        <begin position="146"/>
        <end position="157"/>
    </location>
</feature>
<feature type="compositionally biased region" description="Low complexity" evidence="3">
    <location>
        <begin position="1"/>
        <end position="19"/>
    </location>
</feature>
<feature type="compositionally biased region" description="Polar residues" evidence="3">
    <location>
        <begin position="31"/>
        <end position="41"/>
    </location>
</feature>
<feature type="compositionally biased region" description="Basic residues" evidence="3">
    <location>
        <begin position="145"/>
        <end position="159"/>
    </location>
</feature>
<feature type="sequence conflict" description="In Ref. 3; AAK53018/AAN72236." evidence="5" ref="3">
    <original>R</original>
    <variation>S</variation>
    <location>
        <position position="265"/>
    </location>
</feature>
<feature type="sequence conflict" description="In Ref. 3; AAK53018/AAN72236." evidence="5" ref="3">
    <original>S</original>
    <variation>Y</variation>
    <location>
        <position position="292"/>
    </location>
</feature>
<organism>
    <name type="scientific">Arabidopsis thaliana</name>
    <name type="common">Mouse-ear cress</name>
    <dbReference type="NCBI Taxonomy" id="3702"/>
    <lineage>
        <taxon>Eukaryota</taxon>
        <taxon>Viridiplantae</taxon>
        <taxon>Streptophyta</taxon>
        <taxon>Embryophyta</taxon>
        <taxon>Tracheophyta</taxon>
        <taxon>Spermatophyta</taxon>
        <taxon>Magnoliopsida</taxon>
        <taxon>eudicotyledons</taxon>
        <taxon>Gunneridae</taxon>
        <taxon>Pentapetalae</taxon>
        <taxon>rosids</taxon>
        <taxon>malvids</taxon>
        <taxon>Brassicales</taxon>
        <taxon>Brassicaceae</taxon>
        <taxon>Camelineae</taxon>
        <taxon>Arabidopsis</taxon>
    </lineage>
</organism>
<protein>
    <recommendedName>
        <fullName>Polyadenylate-binding protein-interacting protein 11</fullName>
        <shortName>PABP-interacting protein 11</shortName>
        <shortName>Poly(A)-binding protein-interacting protein 11</shortName>
    </recommendedName>
    <alternativeName>
        <fullName>PAM2-containing protein CID11</fullName>
    </alternativeName>
    <alternativeName>
        <fullName>Protein CTC-INTERACTING DOMAIN 11</fullName>
    </alternativeName>
</protein>